<evidence type="ECO:0000255" key="1">
    <source>
        <dbReference type="HAMAP-Rule" id="MF_00377"/>
    </source>
</evidence>
<reference key="1">
    <citation type="journal article" date="2008" name="PLoS ONE">
        <title>Environmental adaptation: genomic analysis of the piezotolerant and psychrotolerant deep-sea iron reducing bacterium Shewanella piezotolerans WP3.</title>
        <authorList>
            <person name="Wang F."/>
            <person name="Wang J."/>
            <person name="Jian H."/>
            <person name="Zhang B."/>
            <person name="Li S."/>
            <person name="Wang F."/>
            <person name="Zeng X."/>
            <person name="Gao L."/>
            <person name="Bartlett D.H."/>
            <person name="Yu J."/>
            <person name="Hu S."/>
            <person name="Xiao X."/>
        </authorList>
    </citation>
    <scope>NUCLEOTIDE SEQUENCE [LARGE SCALE GENOMIC DNA]</scope>
    <source>
        <strain>WP3 / JCM 13877</strain>
    </source>
</reference>
<keyword id="KW-0067">ATP-binding</keyword>
<keyword id="KW-0963">Cytoplasm</keyword>
<keyword id="KW-0235">DNA replication</keyword>
<keyword id="KW-0238">DNA-binding</keyword>
<keyword id="KW-0446">Lipid-binding</keyword>
<keyword id="KW-0547">Nucleotide-binding</keyword>
<gene>
    <name evidence="1" type="primary">dnaA</name>
    <name type="ordered locus">swp_0015</name>
</gene>
<name>DNAA_SHEPW</name>
<feature type="chain" id="PRO_1000122016" description="Chromosomal replication initiator protein DnaA">
    <location>
        <begin position="1"/>
        <end position="461"/>
    </location>
</feature>
<feature type="region of interest" description="Domain I, interacts with DnaA modulators" evidence="1">
    <location>
        <begin position="1"/>
        <end position="87"/>
    </location>
</feature>
<feature type="region of interest" description="Domain II" evidence="1">
    <location>
        <begin position="87"/>
        <end position="124"/>
    </location>
</feature>
<feature type="region of interest" description="Domain III, AAA+ region" evidence="1">
    <location>
        <begin position="125"/>
        <end position="341"/>
    </location>
</feature>
<feature type="region of interest" description="Domain IV, binds dsDNA" evidence="1">
    <location>
        <begin position="342"/>
        <end position="461"/>
    </location>
</feature>
<feature type="binding site" evidence="1">
    <location>
        <position position="169"/>
    </location>
    <ligand>
        <name>ATP</name>
        <dbReference type="ChEBI" id="CHEBI:30616"/>
    </ligand>
</feature>
<feature type="binding site" evidence="1">
    <location>
        <position position="171"/>
    </location>
    <ligand>
        <name>ATP</name>
        <dbReference type="ChEBI" id="CHEBI:30616"/>
    </ligand>
</feature>
<feature type="binding site" evidence="1">
    <location>
        <position position="172"/>
    </location>
    <ligand>
        <name>ATP</name>
        <dbReference type="ChEBI" id="CHEBI:30616"/>
    </ligand>
</feature>
<feature type="binding site" evidence="1">
    <location>
        <position position="173"/>
    </location>
    <ligand>
        <name>ATP</name>
        <dbReference type="ChEBI" id="CHEBI:30616"/>
    </ligand>
</feature>
<accession>B8CH71</accession>
<proteinExistence type="inferred from homology"/>
<comment type="function">
    <text evidence="1">Plays an essential role in the initiation and regulation of chromosomal replication. ATP-DnaA binds to the origin of replication (oriC) to initiate formation of the DNA replication initiation complex once per cell cycle. Binds the DnaA box (a 9 base pair repeat at the origin) and separates the double-stranded (ds)DNA. Forms a right-handed helical filament on oriC DNA; dsDNA binds to the exterior of the filament while single-stranded (ss)DNA is stabiized in the filament's interior. The ATP-DnaA-oriC complex binds and stabilizes one strand of the AT-rich DNA unwinding element (DUE), permitting loading of DNA polymerase. After initiation quickly degrades to an ADP-DnaA complex that is not apt for DNA replication. Binds acidic phospholipids.</text>
</comment>
<comment type="subunit">
    <text evidence="1">Oligomerizes as a right-handed, spiral filament on DNA at oriC.</text>
</comment>
<comment type="subcellular location">
    <subcellularLocation>
        <location evidence="1">Cytoplasm</location>
    </subcellularLocation>
</comment>
<comment type="domain">
    <text evidence="1">Domain I is involved in oligomerization and binding regulators, domain II is flexibile and of varying length in different bacteria, domain III forms the AAA+ region, while domain IV binds dsDNA.</text>
</comment>
<comment type="similarity">
    <text evidence="1">Belongs to the DnaA family.</text>
</comment>
<protein>
    <recommendedName>
        <fullName evidence="1">Chromosomal replication initiator protein DnaA</fullName>
    </recommendedName>
</protein>
<dbReference type="EMBL" id="CP000472">
    <property type="protein sequence ID" value="ACJ26863.1"/>
    <property type="molecule type" value="Genomic_DNA"/>
</dbReference>
<dbReference type="RefSeq" id="WP_020910247.1">
    <property type="nucleotide sequence ID" value="NC_011566.1"/>
</dbReference>
<dbReference type="SMR" id="B8CH71"/>
<dbReference type="STRING" id="225849.swp_0015"/>
<dbReference type="KEGG" id="swp:swp_0015"/>
<dbReference type="eggNOG" id="COG0593">
    <property type="taxonomic scope" value="Bacteria"/>
</dbReference>
<dbReference type="HOGENOM" id="CLU_026910_0_1_6"/>
<dbReference type="OrthoDB" id="9807019at2"/>
<dbReference type="Proteomes" id="UP000000753">
    <property type="component" value="Chromosome"/>
</dbReference>
<dbReference type="GO" id="GO:0005737">
    <property type="term" value="C:cytoplasm"/>
    <property type="evidence" value="ECO:0007669"/>
    <property type="project" value="UniProtKB-SubCell"/>
</dbReference>
<dbReference type="GO" id="GO:0005886">
    <property type="term" value="C:plasma membrane"/>
    <property type="evidence" value="ECO:0007669"/>
    <property type="project" value="TreeGrafter"/>
</dbReference>
<dbReference type="GO" id="GO:0005524">
    <property type="term" value="F:ATP binding"/>
    <property type="evidence" value="ECO:0007669"/>
    <property type="project" value="UniProtKB-UniRule"/>
</dbReference>
<dbReference type="GO" id="GO:0016887">
    <property type="term" value="F:ATP hydrolysis activity"/>
    <property type="evidence" value="ECO:0007669"/>
    <property type="project" value="InterPro"/>
</dbReference>
<dbReference type="GO" id="GO:0003688">
    <property type="term" value="F:DNA replication origin binding"/>
    <property type="evidence" value="ECO:0007669"/>
    <property type="project" value="UniProtKB-UniRule"/>
</dbReference>
<dbReference type="GO" id="GO:0008289">
    <property type="term" value="F:lipid binding"/>
    <property type="evidence" value="ECO:0007669"/>
    <property type="project" value="UniProtKB-KW"/>
</dbReference>
<dbReference type="GO" id="GO:0006270">
    <property type="term" value="P:DNA replication initiation"/>
    <property type="evidence" value="ECO:0007669"/>
    <property type="project" value="UniProtKB-UniRule"/>
</dbReference>
<dbReference type="GO" id="GO:0006275">
    <property type="term" value="P:regulation of DNA replication"/>
    <property type="evidence" value="ECO:0007669"/>
    <property type="project" value="UniProtKB-UniRule"/>
</dbReference>
<dbReference type="CDD" id="cd00009">
    <property type="entry name" value="AAA"/>
    <property type="match status" value="1"/>
</dbReference>
<dbReference type="CDD" id="cd06571">
    <property type="entry name" value="Bac_DnaA_C"/>
    <property type="match status" value="1"/>
</dbReference>
<dbReference type="FunFam" id="1.10.1750.10:FF:000001">
    <property type="entry name" value="Chromosomal replication initiator protein DnaA"/>
    <property type="match status" value="1"/>
</dbReference>
<dbReference type="FunFam" id="1.10.8.60:FF:000003">
    <property type="entry name" value="Chromosomal replication initiator protein DnaA"/>
    <property type="match status" value="1"/>
</dbReference>
<dbReference type="FunFam" id="3.30.300.180:FF:000001">
    <property type="entry name" value="Chromosomal replication initiator protein DnaA"/>
    <property type="match status" value="1"/>
</dbReference>
<dbReference type="FunFam" id="3.40.50.300:FF:000103">
    <property type="entry name" value="Chromosomal replication initiator protein DnaA"/>
    <property type="match status" value="1"/>
</dbReference>
<dbReference type="Gene3D" id="1.10.1750.10">
    <property type="match status" value="1"/>
</dbReference>
<dbReference type="Gene3D" id="1.10.8.60">
    <property type="match status" value="1"/>
</dbReference>
<dbReference type="Gene3D" id="3.30.300.180">
    <property type="match status" value="1"/>
</dbReference>
<dbReference type="Gene3D" id="3.40.50.300">
    <property type="entry name" value="P-loop containing nucleotide triphosphate hydrolases"/>
    <property type="match status" value="1"/>
</dbReference>
<dbReference type="HAMAP" id="MF_00377">
    <property type="entry name" value="DnaA_bact"/>
    <property type="match status" value="1"/>
</dbReference>
<dbReference type="InterPro" id="IPR003593">
    <property type="entry name" value="AAA+_ATPase"/>
</dbReference>
<dbReference type="InterPro" id="IPR001957">
    <property type="entry name" value="Chromosome_initiator_DnaA"/>
</dbReference>
<dbReference type="InterPro" id="IPR020591">
    <property type="entry name" value="Chromosome_initiator_DnaA-like"/>
</dbReference>
<dbReference type="InterPro" id="IPR018312">
    <property type="entry name" value="Chromosome_initiator_DnaA_CS"/>
</dbReference>
<dbReference type="InterPro" id="IPR013159">
    <property type="entry name" value="DnaA_C"/>
</dbReference>
<dbReference type="InterPro" id="IPR013317">
    <property type="entry name" value="DnaA_dom"/>
</dbReference>
<dbReference type="InterPro" id="IPR024633">
    <property type="entry name" value="DnaA_N_dom"/>
</dbReference>
<dbReference type="InterPro" id="IPR038454">
    <property type="entry name" value="DnaA_N_sf"/>
</dbReference>
<dbReference type="InterPro" id="IPR055199">
    <property type="entry name" value="Hda_lid"/>
</dbReference>
<dbReference type="InterPro" id="IPR027417">
    <property type="entry name" value="P-loop_NTPase"/>
</dbReference>
<dbReference type="InterPro" id="IPR010921">
    <property type="entry name" value="Trp_repressor/repl_initiator"/>
</dbReference>
<dbReference type="NCBIfam" id="TIGR00362">
    <property type="entry name" value="DnaA"/>
    <property type="match status" value="1"/>
</dbReference>
<dbReference type="PANTHER" id="PTHR30050">
    <property type="entry name" value="CHROMOSOMAL REPLICATION INITIATOR PROTEIN DNAA"/>
    <property type="match status" value="1"/>
</dbReference>
<dbReference type="PANTHER" id="PTHR30050:SF2">
    <property type="entry name" value="CHROMOSOMAL REPLICATION INITIATOR PROTEIN DNAA"/>
    <property type="match status" value="1"/>
</dbReference>
<dbReference type="Pfam" id="PF00308">
    <property type="entry name" value="Bac_DnaA"/>
    <property type="match status" value="1"/>
</dbReference>
<dbReference type="Pfam" id="PF08299">
    <property type="entry name" value="Bac_DnaA_C"/>
    <property type="match status" value="1"/>
</dbReference>
<dbReference type="Pfam" id="PF11638">
    <property type="entry name" value="DnaA_N"/>
    <property type="match status" value="1"/>
</dbReference>
<dbReference type="Pfam" id="PF22688">
    <property type="entry name" value="Hda_lid"/>
    <property type="match status" value="1"/>
</dbReference>
<dbReference type="PRINTS" id="PR00051">
    <property type="entry name" value="DNAA"/>
</dbReference>
<dbReference type="SMART" id="SM00382">
    <property type="entry name" value="AAA"/>
    <property type="match status" value="1"/>
</dbReference>
<dbReference type="SMART" id="SM00760">
    <property type="entry name" value="Bac_DnaA_C"/>
    <property type="match status" value="1"/>
</dbReference>
<dbReference type="SUPFAM" id="SSF52540">
    <property type="entry name" value="P-loop containing nucleoside triphosphate hydrolases"/>
    <property type="match status" value="1"/>
</dbReference>
<dbReference type="SUPFAM" id="SSF48295">
    <property type="entry name" value="TrpR-like"/>
    <property type="match status" value="1"/>
</dbReference>
<dbReference type="PROSITE" id="PS01008">
    <property type="entry name" value="DNAA"/>
    <property type="match status" value="1"/>
</dbReference>
<sequence length="461" mass="52099">MAVSLWQQCIARLQDELSAQQFSMWIRPLQAEMEGDTLVIYAPNRFVLDWVRDKYLNIINQFFTEQMGADAPKLRFDIGSRPSAKPVVQATAAIRPKPAASKAVEKPTFNAPQAEPAITANHRSNINPTYQFDNFVEGKSNQLGKAAALQVSENPGGAYNPLFLYGGTGLGKTHLLHAVGNGIIKNKPDAKVVYMHSERFVQDMVKALQNNAIEEFKRYYRSVDALFIDDIQFFANKDRSQEEFFHTFNALLEGNHQIILTSDKYPKEIDGVEDRLKSRFGWGLTVAIEPPELETRVAILMRKAQESGINLPDEVAFFIAKRLRSNVRELEGALNRVIANANFTGRPITIDFVREALRDLLALQEKLVTIDNIQKTVAEYYKIKMADMLSKRRSRSVARPRQMAMALSKELTNQSLPEIGDAFGGRDHTTVLHACRKIAQLREESHDIKEDYANLIRTLSS</sequence>
<organism>
    <name type="scientific">Shewanella piezotolerans (strain WP3 / JCM 13877)</name>
    <dbReference type="NCBI Taxonomy" id="225849"/>
    <lineage>
        <taxon>Bacteria</taxon>
        <taxon>Pseudomonadati</taxon>
        <taxon>Pseudomonadota</taxon>
        <taxon>Gammaproteobacteria</taxon>
        <taxon>Alteromonadales</taxon>
        <taxon>Shewanellaceae</taxon>
        <taxon>Shewanella</taxon>
    </lineage>
</organism>